<dbReference type="EMBL" id="CP000924">
    <property type="protein sequence ID" value="ABY94067.1"/>
    <property type="status" value="ALT_INIT"/>
    <property type="molecule type" value="Genomic_DNA"/>
</dbReference>
<dbReference type="RefSeq" id="WP_003373491.1">
    <property type="nucleotide sequence ID" value="NC_010321.1"/>
</dbReference>
<dbReference type="SMR" id="B0KCM4"/>
<dbReference type="STRING" id="340099.Teth39_0398"/>
<dbReference type="GeneID" id="93001034"/>
<dbReference type="KEGG" id="tpd:Teth39_0398"/>
<dbReference type="eggNOG" id="COG0257">
    <property type="taxonomic scope" value="Bacteria"/>
</dbReference>
<dbReference type="HOGENOM" id="CLU_135723_6_1_9"/>
<dbReference type="Proteomes" id="UP000002156">
    <property type="component" value="Chromosome"/>
</dbReference>
<dbReference type="GO" id="GO:0005737">
    <property type="term" value="C:cytoplasm"/>
    <property type="evidence" value="ECO:0007669"/>
    <property type="project" value="UniProtKB-ARBA"/>
</dbReference>
<dbReference type="GO" id="GO:1990904">
    <property type="term" value="C:ribonucleoprotein complex"/>
    <property type="evidence" value="ECO:0007669"/>
    <property type="project" value="UniProtKB-KW"/>
</dbReference>
<dbReference type="GO" id="GO:0005840">
    <property type="term" value="C:ribosome"/>
    <property type="evidence" value="ECO:0007669"/>
    <property type="project" value="UniProtKB-KW"/>
</dbReference>
<dbReference type="GO" id="GO:0003735">
    <property type="term" value="F:structural constituent of ribosome"/>
    <property type="evidence" value="ECO:0007669"/>
    <property type="project" value="InterPro"/>
</dbReference>
<dbReference type="GO" id="GO:0006412">
    <property type="term" value="P:translation"/>
    <property type="evidence" value="ECO:0007669"/>
    <property type="project" value="UniProtKB-UniRule"/>
</dbReference>
<dbReference type="HAMAP" id="MF_00251">
    <property type="entry name" value="Ribosomal_bL36"/>
    <property type="match status" value="1"/>
</dbReference>
<dbReference type="InterPro" id="IPR000473">
    <property type="entry name" value="Ribosomal_bL36"/>
</dbReference>
<dbReference type="InterPro" id="IPR035977">
    <property type="entry name" value="Ribosomal_bL36_sp"/>
</dbReference>
<dbReference type="NCBIfam" id="TIGR01022">
    <property type="entry name" value="rpmJ_bact"/>
    <property type="match status" value="1"/>
</dbReference>
<dbReference type="PANTHER" id="PTHR42888">
    <property type="entry name" value="50S RIBOSOMAL PROTEIN L36, CHLOROPLASTIC"/>
    <property type="match status" value="1"/>
</dbReference>
<dbReference type="PANTHER" id="PTHR42888:SF1">
    <property type="entry name" value="LARGE RIBOSOMAL SUBUNIT PROTEIN BL36C"/>
    <property type="match status" value="1"/>
</dbReference>
<dbReference type="Pfam" id="PF00444">
    <property type="entry name" value="Ribosomal_L36"/>
    <property type="match status" value="1"/>
</dbReference>
<dbReference type="SUPFAM" id="SSF57840">
    <property type="entry name" value="Ribosomal protein L36"/>
    <property type="match status" value="1"/>
</dbReference>
<dbReference type="PROSITE" id="PS00828">
    <property type="entry name" value="RIBOSOMAL_L36"/>
    <property type="match status" value="1"/>
</dbReference>
<reference key="1">
    <citation type="submission" date="2008-01" db="EMBL/GenBank/DDBJ databases">
        <title>Complete sequence of Thermoanaerobacter pseudethanolicus 39E.</title>
        <authorList>
            <person name="Copeland A."/>
            <person name="Lucas S."/>
            <person name="Lapidus A."/>
            <person name="Barry K."/>
            <person name="Glavina del Rio T."/>
            <person name="Dalin E."/>
            <person name="Tice H."/>
            <person name="Pitluck S."/>
            <person name="Bruce D."/>
            <person name="Goodwin L."/>
            <person name="Saunders E."/>
            <person name="Brettin T."/>
            <person name="Detter J.C."/>
            <person name="Han C."/>
            <person name="Schmutz J."/>
            <person name="Larimer F."/>
            <person name="Land M."/>
            <person name="Hauser L."/>
            <person name="Kyrpides N."/>
            <person name="Lykidis A."/>
            <person name="Hemme C."/>
            <person name="Fields M.W."/>
            <person name="He Z."/>
            <person name="Zhou J."/>
            <person name="Richardson P."/>
        </authorList>
    </citation>
    <scope>NUCLEOTIDE SEQUENCE [LARGE SCALE GENOMIC DNA]</scope>
    <source>
        <strain>ATCC 33223 / DSM 2355 / 39E</strain>
    </source>
</reference>
<proteinExistence type="inferred from homology"/>
<protein>
    <recommendedName>
        <fullName evidence="1">Large ribosomal subunit protein bL36</fullName>
    </recommendedName>
    <alternativeName>
        <fullName evidence="2">50S ribosomal protein L36</fullName>
    </alternativeName>
</protein>
<sequence length="37" mass="4305">MKVRPSVKPICEKCKVIKRKGRVMVICENPKHKQKQG</sequence>
<evidence type="ECO:0000255" key="1">
    <source>
        <dbReference type="HAMAP-Rule" id="MF_00251"/>
    </source>
</evidence>
<evidence type="ECO:0000305" key="2"/>
<keyword id="KW-1185">Reference proteome</keyword>
<keyword id="KW-0687">Ribonucleoprotein</keyword>
<keyword id="KW-0689">Ribosomal protein</keyword>
<feature type="chain" id="PRO_0000344724" description="Large ribosomal subunit protein bL36">
    <location>
        <begin position="1"/>
        <end position="37"/>
    </location>
</feature>
<comment type="similarity">
    <text evidence="1">Belongs to the bacterial ribosomal protein bL36 family.</text>
</comment>
<comment type="sequence caution" evidence="2">
    <conflict type="erroneous initiation">
        <sequence resource="EMBL-CDS" id="ABY94067"/>
    </conflict>
</comment>
<organism>
    <name type="scientific">Thermoanaerobacter pseudethanolicus (strain ATCC 33223 / 39E)</name>
    <name type="common">Clostridium thermohydrosulfuricum</name>
    <dbReference type="NCBI Taxonomy" id="340099"/>
    <lineage>
        <taxon>Bacteria</taxon>
        <taxon>Bacillati</taxon>
        <taxon>Bacillota</taxon>
        <taxon>Clostridia</taxon>
        <taxon>Thermoanaerobacterales</taxon>
        <taxon>Thermoanaerobacteraceae</taxon>
        <taxon>Thermoanaerobacter</taxon>
    </lineage>
</organism>
<gene>
    <name evidence="1" type="primary">rpmJ</name>
    <name type="ordered locus">Teth39_0398</name>
</gene>
<name>RL36_THEP3</name>
<accession>B0KCM4</accession>